<organism>
    <name type="scientific">Xylella fastidiosa (strain M12)</name>
    <dbReference type="NCBI Taxonomy" id="405440"/>
    <lineage>
        <taxon>Bacteria</taxon>
        <taxon>Pseudomonadati</taxon>
        <taxon>Pseudomonadota</taxon>
        <taxon>Gammaproteobacteria</taxon>
        <taxon>Lysobacterales</taxon>
        <taxon>Lysobacteraceae</taxon>
        <taxon>Xylella</taxon>
    </lineage>
</organism>
<accession>B0U4B5</accession>
<name>TSAD_XYLFM</name>
<comment type="function">
    <text evidence="1">Required for the formation of a threonylcarbamoyl group on adenosine at position 37 (t(6)A37) in tRNAs that read codons beginning with adenine. Is involved in the transfer of the threonylcarbamoyl moiety of threonylcarbamoyl-AMP (TC-AMP) to the N6 group of A37, together with TsaE and TsaB. TsaD likely plays a direct catalytic role in this reaction.</text>
</comment>
<comment type="catalytic activity">
    <reaction evidence="1">
        <text>L-threonylcarbamoyladenylate + adenosine(37) in tRNA = N(6)-L-threonylcarbamoyladenosine(37) in tRNA + AMP + H(+)</text>
        <dbReference type="Rhea" id="RHEA:37059"/>
        <dbReference type="Rhea" id="RHEA-COMP:10162"/>
        <dbReference type="Rhea" id="RHEA-COMP:10163"/>
        <dbReference type="ChEBI" id="CHEBI:15378"/>
        <dbReference type="ChEBI" id="CHEBI:73682"/>
        <dbReference type="ChEBI" id="CHEBI:74411"/>
        <dbReference type="ChEBI" id="CHEBI:74418"/>
        <dbReference type="ChEBI" id="CHEBI:456215"/>
        <dbReference type="EC" id="2.3.1.234"/>
    </reaction>
</comment>
<comment type="cofactor">
    <cofactor evidence="1">
        <name>Fe(2+)</name>
        <dbReference type="ChEBI" id="CHEBI:29033"/>
    </cofactor>
    <text evidence="1">Binds 1 Fe(2+) ion per subunit.</text>
</comment>
<comment type="subcellular location">
    <subcellularLocation>
        <location evidence="1">Cytoplasm</location>
    </subcellularLocation>
</comment>
<comment type="similarity">
    <text evidence="1">Belongs to the KAE1 / TsaD family.</text>
</comment>
<keyword id="KW-0012">Acyltransferase</keyword>
<keyword id="KW-0963">Cytoplasm</keyword>
<keyword id="KW-0408">Iron</keyword>
<keyword id="KW-0479">Metal-binding</keyword>
<keyword id="KW-0808">Transferase</keyword>
<keyword id="KW-0819">tRNA processing</keyword>
<dbReference type="EC" id="2.3.1.234" evidence="1"/>
<dbReference type="EMBL" id="CP000941">
    <property type="protein sequence ID" value="ACA12694.1"/>
    <property type="molecule type" value="Genomic_DNA"/>
</dbReference>
<dbReference type="RefSeq" id="WP_004083595.1">
    <property type="nucleotide sequence ID" value="NC_010513.1"/>
</dbReference>
<dbReference type="SMR" id="B0U4B5"/>
<dbReference type="GeneID" id="93905477"/>
<dbReference type="KEGG" id="xfm:Xfasm12_1803"/>
<dbReference type="HOGENOM" id="CLU_023208_0_0_6"/>
<dbReference type="GO" id="GO:0005737">
    <property type="term" value="C:cytoplasm"/>
    <property type="evidence" value="ECO:0007669"/>
    <property type="project" value="UniProtKB-SubCell"/>
</dbReference>
<dbReference type="GO" id="GO:0005506">
    <property type="term" value="F:iron ion binding"/>
    <property type="evidence" value="ECO:0007669"/>
    <property type="project" value="UniProtKB-UniRule"/>
</dbReference>
<dbReference type="GO" id="GO:0061711">
    <property type="term" value="F:N(6)-L-threonylcarbamoyladenine synthase activity"/>
    <property type="evidence" value="ECO:0007669"/>
    <property type="project" value="UniProtKB-EC"/>
</dbReference>
<dbReference type="GO" id="GO:0002949">
    <property type="term" value="P:tRNA threonylcarbamoyladenosine modification"/>
    <property type="evidence" value="ECO:0007669"/>
    <property type="project" value="UniProtKB-UniRule"/>
</dbReference>
<dbReference type="CDD" id="cd24133">
    <property type="entry name" value="ASKHA_NBD_TsaD_bac"/>
    <property type="match status" value="1"/>
</dbReference>
<dbReference type="FunFam" id="3.30.420.40:FF:000040">
    <property type="entry name" value="tRNA N6-adenosine threonylcarbamoyltransferase"/>
    <property type="match status" value="1"/>
</dbReference>
<dbReference type="Gene3D" id="3.30.420.40">
    <property type="match status" value="2"/>
</dbReference>
<dbReference type="HAMAP" id="MF_01445">
    <property type="entry name" value="TsaD"/>
    <property type="match status" value="1"/>
</dbReference>
<dbReference type="InterPro" id="IPR043129">
    <property type="entry name" value="ATPase_NBD"/>
</dbReference>
<dbReference type="InterPro" id="IPR000905">
    <property type="entry name" value="Gcp-like_dom"/>
</dbReference>
<dbReference type="InterPro" id="IPR017861">
    <property type="entry name" value="KAE1/TsaD"/>
</dbReference>
<dbReference type="InterPro" id="IPR022450">
    <property type="entry name" value="TsaD"/>
</dbReference>
<dbReference type="NCBIfam" id="TIGR00329">
    <property type="entry name" value="gcp_kae1"/>
    <property type="match status" value="1"/>
</dbReference>
<dbReference type="NCBIfam" id="TIGR03723">
    <property type="entry name" value="T6A_TsaD_YgjD"/>
    <property type="match status" value="1"/>
</dbReference>
<dbReference type="PANTHER" id="PTHR11735">
    <property type="entry name" value="TRNA N6-ADENOSINE THREONYLCARBAMOYLTRANSFERASE"/>
    <property type="match status" value="1"/>
</dbReference>
<dbReference type="PANTHER" id="PTHR11735:SF6">
    <property type="entry name" value="TRNA N6-ADENOSINE THREONYLCARBAMOYLTRANSFERASE, MITOCHONDRIAL"/>
    <property type="match status" value="1"/>
</dbReference>
<dbReference type="Pfam" id="PF00814">
    <property type="entry name" value="TsaD"/>
    <property type="match status" value="1"/>
</dbReference>
<dbReference type="PRINTS" id="PR00789">
    <property type="entry name" value="OSIALOPTASE"/>
</dbReference>
<dbReference type="SUPFAM" id="SSF53067">
    <property type="entry name" value="Actin-like ATPase domain"/>
    <property type="match status" value="2"/>
</dbReference>
<gene>
    <name evidence="1" type="primary">tsaD</name>
    <name type="synonym">gcp</name>
    <name type="ordered locus">Xfasm12_1803</name>
</gene>
<protein>
    <recommendedName>
        <fullName evidence="1">tRNA N6-adenosine threonylcarbamoyltransferase</fullName>
        <ecNumber evidence="1">2.3.1.234</ecNumber>
    </recommendedName>
    <alternativeName>
        <fullName evidence="1">N6-L-threonylcarbamoyladenine synthase</fullName>
        <shortName evidence="1">t(6)A synthase</shortName>
    </alternativeName>
    <alternativeName>
        <fullName evidence="1">t(6)A37 threonylcarbamoyladenosine biosynthesis protein TsaD</fullName>
    </alternativeName>
    <alternativeName>
        <fullName evidence="1">tRNA threonylcarbamoyladenosine biosynthesis protein TsaD</fullName>
    </alternativeName>
</protein>
<feature type="chain" id="PRO_1000146045" description="tRNA N6-adenosine threonylcarbamoyltransferase">
    <location>
        <begin position="1"/>
        <end position="348"/>
    </location>
</feature>
<feature type="binding site" evidence="1">
    <location>
        <position position="115"/>
    </location>
    <ligand>
        <name>Fe cation</name>
        <dbReference type="ChEBI" id="CHEBI:24875"/>
    </ligand>
</feature>
<feature type="binding site" evidence="1">
    <location>
        <position position="119"/>
    </location>
    <ligand>
        <name>Fe cation</name>
        <dbReference type="ChEBI" id="CHEBI:24875"/>
    </ligand>
</feature>
<feature type="binding site" evidence="1">
    <location>
        <begin position="138"/>
        <end position="142"/>
    </location>
    <ligand>
        <name>substrate</name>
    </ligand>
</feature>
<feature type="binding site" evidence="1">
    <location>
        <position position="171"/>
    </location>
    <ligand>
        <name>substrate</name>
    </ligand>
</feature>
<feature type="binding site" evidence="1">
    <location>
        <position position="184"/>
    </location>
    <ligand>
        <name>substrate</name>
    </ligand>
</feature>
<feature type="binding site" evidence="1">
    <location>
        <position position="276"/>
    </location>
    <ligand>
        <name>substrate</name>
    </ligand>
</feature>
<feature type="binding site" evidence="1">
    <location>
        <position position="304"/>
    </location>
    <ligand>
        <name>Fe cation</name>
        <dbReference type="ChEBI" id="CHEBI:24875"/>
    </ligand>
</feature>
<reference key="1">
    <citation type="journal article" date="2010" name="J. Bacteriol.">
        <title>Whole genome sequences of two Xylella fastidiosa strains (M12 and M23) causing almond leaf scorch disease in California.</title>
        <authorList>
            <person name="Chen J."/>
            <person name="Xie G."/>
            <person name="Han S."/>
            <person name="Chertkov O."/>
            <person name="Sims D."/>
            <person name="Civerolo E.L."/>
        </authorList>
    </citation>
    <scope>NUCLEOTIDE SEQUENCE [LARGE SCALE GENOMIC DNA]</scope>
    <source>
        <strain>M12</strain>
    </source>
</reference>
<evidence type="ECO:0000255" key="1">
    <source>
        <dbReference type="HAMAP-Rule" id="MF_01445"/>
    </source>
</evidence>
<sequence length="348" mass="36752">MKIIGIESSCDETGVAVYDTALSGSAALRAHSVYSQVALHAEYGGVVPELASRDHVRKLLPLLRQTLAEAKLSVEELDGVAYTAGPGLVGALLVGAGVARALAWALEVPAIGVHHMEGHLLSPLLEDDPPEVPFVALLVSGGHTQLVAVDAIGDYRLLGETLDDAAGEAFDKVAKLMGLPYPGGPQLAALAERGIPGRFCFTRPMVDRPGLDFSFSGLKTQVLLAWRNSDQSDAIRVDVARGFEDAVVDTLAIKCERALDTVACQTLVVAGGVGANKCLRARLQAMCRQRGGRACFPRPALCTDNGAMIAFAGALRLQAGQQSDVAVRVTPRWDMAALPPLVSRSCRR</sequence>
<proteinExistence type="inferred from homology"/>